<dbReference type="EMBL" id="CP000001">
    <property type="protein sequence ID" value="AAU20122.1"/>
    <property type="molecule type" value="Genomic_DNA"/>
</dbReference>
<dbReference type="RefSeq" id="WP_001148025.1">
    <property type="nucleotide sequence ID" value="NZ_CP009968.1"/>
</dbReference>
<dbReference type="SMR" id="Q63H85"/>
<dbReference type="GeneID" id="93010938"/>
<dbReference type="KEGG" id="bcz:BCE33L0109"/>
<dbReference type="PATRIC" id="fig|288681.22.peg.42"/>
<dbReference type="Proteomes" id="UP000002612">
    <property type="component" value="Chromosome"/>
</dbReference>
<dbReference type="GO" id="GO:0022625">
    <property type="term" value="C:cytosolic large ribosomal subunit"/>
    <property type="evidence" value="ECO:0007669"/>
    <property type="project" value="TreeGrafter"/>
</dbReference>
<dbReference type="GO" id="GO:0019843">
    <property type="term" value="F:rRNA binding"/>
    <property type="evidence" value="ECO:0007669"/>
    <property type="project" value="UniProtKB-UniRule"/>
</dbReference>
<dbReference type="GO" id="GO:0003735">
    <property type="term" value="F:structural constituent of ribosome"/>
    <property type="evidence" value="ECO:0007669"/>
    <property type="project" value="InterPro"/>
</dbReference>
<dbReference type="GO" id="GO:0006412">
    <property type="term" value="P:translation"/>
    <property type="evidence" value="ECO:0007669"/>
    <property type="project" value="UniProtKB-UniRule"/>
</dbReference>
<dbReference type="CDD" id="cd00336">
    <property type="entry name" value="Ribosomal_L22"/>
    <property type="match status" value="1"/>
</dbReference>
<dbReference type="FunFam" id="3.90.470.10:FF:000001">
    <property type="entry name" value="50S ribosomal protein L22"/>
    <property type="match status" value="1"/>
</dbReference>
<dbReference type="Gene3D" id="3.90.470.10">
    <property type="entry name" value="Ribosomal protein L22/L17"/>
    <property type="match status" value="1"/>
</dbReference>
<dbReference type="HAMAP" id="MF_01331_B">
    <property type="entry name" value="Ribosomal_uL22_B"/>
    <property type="match status" value="1"/>
</dbReference>
<dbReference type="InterPro" id="IPR001063">
    <property type="entry name" value="Ribosomal_uL22"/>
</dbReference>
<dbReference type="InterPro" id="IPR005727">
    <property type="entry name" value="Ribosomal_uL22_bac/chlpt-type"/>
</dbReference>
<dbReference type="InterPro" id="IPR047867">
    <property type="entry name" value="Ribosomal_uL22_bac/org-type"/>
</dbReference>
<dbReference type="InterPro" id="IPR018260">
    <property type="entry name" value="Ribosomal_uL22_CS"/>
</dbReference>
<dbReference type="InterPro" id="IPR036394">
    <property type="entry name" value="Ribosomal_uL22_sf"/>
</dbReference>
<dbReference type="NCBIfam" id="TIGR01044">
    <property type="entry name" value="rplV_bact"/>
    <property type="match status" value="1"/>
</dbReference>
<dbReference type="PANTHER" id="PTHR13501">
    <property type="entry name" value="CHLOROPLAST 50S RIBOSOMAL PROTEIN L22-RELATED"/>
    <property type="match status" value="1"/>
</dbReference>
<dbReference type="PANTHER" id="PTHR13501:SF8">
    <property type="entry name" value="LARGE RIBOSOMAL SUBUNIT PROTEIN UL22M"/>
    <property type="match status" value="1"/>
</dbReference>
<dbReference type="Pfam" id="PF00237">
    <property type="entry name" value="Ribosomal_L22"/>
    <property type="match status" value="1"/>
</dbReference>
<dbReference type="SUPFAM" id="SSF54843">
    <property type="entry name" value="Ribosomal protein L22"/>
    <property type="match status" value="1"/>
</dbReference>
<dbReference type="PROSITE" id="PS00464">
    <property type="entry name" value="RIBOSOMAL_L22"/>
    <property type="match status" value="1"/>
</dbReference>
<protein>
    <recommendedName>
        <fullName evidence="1">Large ribosomal subunit protein uL22</fullName>
    </recommendedName>
    <alternativeName>
        <fullName evidence="2">50S ribosomal protein L22</fullName>
    </alternativeName>
</protein>
<keyword id="KW-0687">Ribonucleoprotein</keyword>
<keyword id="KW-0689">Ribosomal protein</keyword>
<keyword id="KW-0694">RNA-binding</keyword>
<keyword id="KW-0699">rRNA-binding</keyword>
<feature type="chain" id="PRO_0000243117" description="Large ribosomal subunit protein uL22">
    <location>
        <begin position="1"/>
        <end position="113"/>
    </location>
</feature>
<gene>
    <name evidence="1" type="primary">rplV</name>
    <name type="ordered locus">BCE33L0109</name>
</gene>
<evidence type="ECO:0000255" key="1">
    <source>
        <dbReference type="HAMAP-Rule" id="MF_01331"/>
    </source>
</evidence>
<evidence type="ECO:0000305" key="2"/>
<name>RL22_BACCZ</name>
<sequence>MQAKAVARTVRIAPRKVRLVVDLIRGKQVGEAIAILNHTPKTASPVVEKVLKSAIANAEHNYEMDINSLVVEKVFVDEGPTLKRFRPRAMGRASQINKRTSHITVVVSEKKEG</sequence>
<organism>
    <name type="scientific">Bacillus cereus (strain ZK / E33L)</name>
    <dbReference type="NCBI Taxonomy" id="288681"/>
    <lineage>
        <taxon>Bacteria</taxon>
        <taxon>Bacillati</taxon>
        <taxon>Bacillota</taxon>
        <taxon>Bacilli</taxon>
        <taxon>Bacillales</taxon>
        <taxon>Bacillaceae</taxon>
        <taxon>Bacillus</taxon>
        <taxon>Bacillus cereus group</taxon>
    </lineage>
</organism>
<reference key="1">
    <citation type="journal article" date="2006" name="J. Bacteriol.">
        <title>Pathogenomic sequence analysis of Bacillus cereus and Bacillus thuringiensis isolates closely related to Bacillus anthracis.</title>
        <authorList>
            <person name="Han C.S."/>
            <person name="Xie G."/>
            <person name="Challacombe J.F."/>
            <person name="Altherr M.R."/>
            <person name="Bhotika S.S."/>
            <person name="Bruce D."/>
            <person name="Campbell C.S."/>
            <person name="Campbell M.L."/>
            <person name="Chen J."/>
            <person name="Chertkov O."/>
            <person name="Cleland C."/>
            <person name="Dimitrijevic M."/>
            <person name="Doggett N.A."/>
            <person name="Fawcett J.J."/>
            <person name="Glavina T."/>
            <person name="Goodwin L.A."/>
            <person name="Hill K.K."/>
            <person name="Hitchcock P."/>
            <person name="Jackson P.J."/>
            <person name="Keim P."/>
            <person name="Kewalramani A.R."/>
            <person name="Longmire J."/>
            <person name="Lucas S."/>
            <person name="Malfatti S."/>
            <person name="McMurry K."/>
            <person name="Meincke L.J."/>
            <person name="Misra M."/>
            <person name="Moseman B.L."/>
            <person name="Mundt M."/>
            <person name="Munk A.C."/>
            <person name="Okinaka R.T."/>
            <person name="Parson-Quintana B."/>
            <person name="Reilly L.P."/>
            <person name="Richardson P."/>
            <person name="Robinson D.L."/>
            <person name="Rubin E."/>
            <person name="Saunders E."/>
            <person name="Tapia R."/>
            <person name="Tesmer J.G."/>
            <person name="Thayer N."/>
            <person name="Thompson L.S."/>
            <person name="Tice H."/>
            <person name="Ticknor L.O."/>
            <person name="Wills P.L."/>
            <person name="Brettin T.S."/>
            <person name="Gilna P."/>
        </authorList>
    </citation>
    <scope>NUCLEOTIDE SEQUENCE [LARGE SCALE GENOMIC DNA]</scope>
    <source>
        <strain>ZK / E33L</strain>
    </source>
</reference>
<proteinExistence type="inferred from homology"/>
<comment type="function">
    <text evidence="1">This protein binds specifically to 23S rRNA; its binding is stimulated by other ribosomal proteins, e.g. L4, L17, and L20. It is important during the early stages of 50S assembly. It makes multiple contacts with different domains of the 23S rRNA in the assembled 50S subunit and ribosome (By similarity).</text>
</comment>
<comment type="function">
    <text evidence="1">The globular domain of the protein is located near the polypeptide exit tunnel on the outside of the subunit, while an extended beta-hairpin is found that lines the wall of the exit tunnel in the center of the 70S ribosome.</text>
</comment>
<comment type="subunit">
    <text evidence="1">Part of the 50S ribosomal subunit.</text>
</comment>
<comment type="similarity">
    <text evidence="1">Belongs to the universal ribosomal protein uL22 family.</text>
</comment>
<accession>Q63H85</accession>